<reference key="1">
    <citation type="journal article" date="2004" name="Nat. Genet.">
        <title>Complete sequencing and characterization of 21,243 full-length human cDNAs.</title>
        <authorList>
            <person name="Ota T."/>
            <person name="Suzuki Y."/>
            <person name="Nishikawa T."/>
            <person name="Otsuki T."/>
            <person name="Sugiyama T."/>
            <person name="Irie R."/>
            <person name="Wakamatsu A."/>
            <person name="Hayashi K."/>
            <person name="Sato H."/>
            <person name="Nagai K."/>
            <person name="Kimura K."/>
            <person name="Makita H."/>
            <person name="Sekine M."/>
            <person name="Obayashi M."/>
            <person name="Nishi T."/>
            <person name="Shibahara T."/>
            <person name="Tanaka T."/>
            <person name="Ishii S."/>
            <person name="Yamamoto J."/>
            <person name="Saito K."/>
            <person name="Kawai Y."/>
            <person name="Isono Y."/>
            <person name="Nakamura Y."/>
            <person name="Nagahari K."/>
            <person name="Murakami K."/>
            <person name="Yasuda T."/>
            <person name="Iwayanagi T."/>
            <person name="Wagatsuma M."/>
            <person name="Shiratori A."/>
            <person name="Sudo H."/>
            <person name="Hosoiri T."/>
            <person name="Kaku Y."/>
            <person name="Kodaira H."/>
            <person name="Kondo H."/>
            <person name="Sugawara M."/>
            <person name="Takahashi M."/>
            <person name="Kanda K."/>
            <person name="Yokoi T."/>
            <person name="Furuya T."/>
            <person name="Kikkawa E."/>
            <person name="Omura Y."/>
            <person name="Abe K."/>
            <person name="Kamihara K."/>
            <person name="Katsuta N."/>
            <person name="Sato K."/>
            <person name="Tanikawa M."/>
            <person name="Yamazaki M."/>
            <person name="Ninomiya K."/>
            <person name="Ishibashi T."/>
            <person name="Yamashita H."/>
            <person name="Murakawa K."/>
            <person name="Fujimori K."/>
            <person name="Tanai H."/>
            <person name="Kimata M."/>
            <person name="Watanabe M."/>
            <person name="Hiraoka S."/>
            <person name="Chiba Y."/>
            <person name="Ishida S."/>
            <person name="Ono Y."/>
            <person name="Takiguchi S."/>
            <person name="Watanabe S."/>
            <person name="Yosida M."/>
            <person name="Hotuta T."/>
            <person name="Kusano J."/>
            <person name="Kanehori K."/>
            <person name="Takahashi-Fujii A."/>
            <person name="Hara H."/>
            <person name="Tanase T.-O."/>
            <person name="Nomura Y."/>
            <person name="Togiya S."/>
            <person name="Komai F."/>
            <person name="Hara R."/>
            <person name="Takeuchi K."/>
            <person name="Arita M."/>
            <person name="Imose N."/>
            <person name="Musashino K."/>
            <person name="Yuuki H."/>
            <person name="Oshima A."/>
            <person name="Sasaki N."/>
            <person name="Aotsuka S."/>
            <person name="Yoshikawa Y."/>
            <person name="Matsunawa H."/>
            <person name="Ichihara T."/>
            <person name="Shiohata N."/>
            <person name="Sano S."/>
            <person name="Moriya S."/>
            <person name="Momiyama H."/>
            <person name="Satoh N."/>
            <person name="Takami S."/>
            <person name="Terashima Y."/>
            <person name="Suzuki O."/>
            <person name="Nakagawa S."/>
            <person name="Senoh A."/>
            <person name="Mizoguchi H."/>
            <person name="Goto Y."/>
            <person name="Shimizu F."/>
            <person name="Wakebe H."/>
            <person name="Hishigaki H."/>
            <person name="Watanabe T."/>
            <person name="Sugiyama A."/>
            <person name="Takemoto M."/>
            <person name="Kawakami B."/>
            <person name="Yamazaki M."/>
            <person name="Watanabe K."/>
            <person name="Kumagai A."/>
            <person name="Itakura S."/>
            <person name="Fukuzumi Y."/>
            <person name="Fujimori Y."/>
            <person name="Komiyama M."/>
            <person name="Tashiro H."/>
            <person name="Tanigami A."/>
            <person name="Fujiwara T."/>
            <person name="Ono T."/>
            <person name="Yamada K."/>
            <person name="Fujii Y."/>
            <person name="Ozaki K."/>
            <person name="Hirao M."/>
            <person name="Ohmori Y."/>
            <person name="Kawabata A."/>
            <person name="Hikiji T."/>
            <person name="Kobatake N."/>
            <person name="Inagaki H."/>
            <person name="Ikema Y."/>
            <person name="Okamoto S."/>
            <person name="Okitani R."/>
            <person name="Kawakami T."/>
            <person name="Noguchi S."/>
            <person name="Itoh T."/>
            <person name="Shigeta K."/>
            <person name="Senba T."/>
            <person name="Matsumura K."/>
            <person name="Nakajima Y."/>
            <person name="Mizuno T."/>
            <person name="Morinaga M."/>
            <person name="Sasaki M."/>
            <person name="Togashi T."/>
            <person name="Oyama M."/>
            <person name="Hata H."/>
            <person name="Watanabe M."/>
            <person name="Komatsu T."/>
            <person name="Mizushima-Sugano J."/>
            <person name="Satoh T."/>
            <person name="Shirai Y."/>
            <person name="Takahashi Y."/>
            <person name="Nakagawa K."/>
            <person name="Okumura K."/>
            <person name="Nagase T."/>
            <person name="Nomura N."/>
            <person name="Kikuchi H."/>
            <person name="Masuho Y."/>
            <person name="Yamashita R."/>
            <person name="Nakai K."/>
            <person name="Yada T."/>
            <person name="Nakamura Y."/>
            <person name="Ohara O."/>
            <person name="Isogai T."/>
            <person name="Sugano S."/>
        </authorList>
    </citation>
    <scope>NUCLEOTIDE SEQUENCE [LARGE SCALE MRNA] (ISOFORM 3)</scope>
</reference>
<reference key="2">
    <citation type="journal article" date="2006" name="Nature">
        <title>DNA sequence and analysis of human chromosome 8.</title>
        <authorList>
            <person name="Nusbaum C."/>
            <person name="Mikkelsen T.S."/>
            <person name="Zody M.C."/>
            <person name="Asakawa S."/>
            <person name="Taudien S."/>
            <person name="Garber M."/>
            <person name="Kodira C.D."/>
            <person name="Schueler M.G."/>
            <person name="Shimizu A."/>
            <person name="Whittaker C.A."/>
            <person name="Chang J.L."/>
            <person name="Cuomo C.A."/>
            <person name="Dewar K."/>
            <person name="FitzGerald M.G."/>
            <person name="Yang X."/>
            <person name="Allen N.R."/>
            <person name="Anderson S."/>
            <person name="Asakawa T."/>
            <person name="Blechschmidt K."/>
            <person name="Bloom T."/>
            <person name="Borowsky M.L."/>
            <person name="Butler J."/>
            <person name="Cook A."/>
            <person name="Corum B."/>
            <person name="DeArellano K."/>
            <person name="DeCaprio D."/>
            <person name="Dooley K.T."/>
            <person name="Dorris L. III"/>
            <person name="Engels R."/>
            <person name="Gloeckner G."/>
            <person name="Hafez N."/>
            <person name="Hagopian D.S."/>
            <person name="Hall J.L."/>
            <person name="Ishikawa S.K."/>
            <person name="Jaffe D.B."/>
            <person name="Kamat A."/>
            <person name="Kudoh J."/>
            <person name="Lehmann R."/>
            <person name="Lokitsang T."/>
            <person name="Macdonald P."/>
            <person name="Major J.E."/>
            <person name="Matthews C.D."/>
            <person name="Mauceli E."/>
            <person name="Menzel U."/>
            <person name="Mihalev A.H."/>
            <person name="Minoshima S."/>
            <person name="Murayama Y."/>
            <person name="Naylor J.W."/>
            <person name="Nicol R."/>
            <person name="Nguyen C."/>
            <person name="O'Leary S.B."/>
            <person name="O'Neill K."/>
            <person name="Parker S.C.J."/>
            <person name="Polley A."/>
            <person name="Raymond C.K."/>
            <person name="Reichwald K."/>
            <person name="Rodriguez J."/>
            <person name="Sasaki T."/>
            <person name="Schilhabel M."/>
            <person name="Siddiqui R."/>
            <person name="Smith C.L."/>
            <person name="Sneddon T.P."/>
            <person name="Talamas J.A."/>
            <person name="Tenzin P."/>
            <person name="Topham K."/>
            <person name="Venkataraman V."/>
            <person name="Wen G."/>
            <person name="Yamazaki S."/>
            <person name="Young S.K."/>
            <person name="Zeng Q."/>
            <person name="Zimmer A.R."/>
            <person name="Rosenthal A."/>
            <person name="Birren B.W."/>
            <person name="Platzer M."/>
            <person name="Shimizu N."/>
            <person name="Lander E.S."/>
        </authorList>
    </citation>
    <scope>NUCLEOTIDE SEQUENCE [LARGE SCALE GENOMIC DNA]</scope>
</reference>
<reference key="3">
    <citation type="journal article" date="2004" name="Genome Res.">
        <title>The status, quality, and expansion of the NIH full-length cDNA project: the Mammalian Gene Collection (MGC).</title>
        <authorList>
            <consortium name="The MGC Project Team"/>
        </authorList>
    </citation>
    <scope>NUCLEOTIDE SEQUENCE [LARGE SCALE MRNA] (ISOFORM 2)</scope>
</reference>
<reference key="4">
    <citation type="submission" date="2002-09" db="EMBL/GenBank/DDBJ databases">
        <authorList>
            <person name="Ding P."/>
            <person name="Jin C."/>
            <person name="Han W."/>
            <person name="Wang L."/>
            <person name="Song Q."/>
            <person name="Zhang Y."/>
            <person name="Ma D."/>
        </authorList>
    </citation>
    <scope>NUCLEOTIDE SEQUENCE [MRNA] OF 66-380 (ISOFORM 1)</scope>
    <source>
        <tissue>Testis</tissue>
    </source>
</reference>
<reference key="5">
    <citation type="journal article" date="2007" name="BMC Genomics">
        <title>The full-ORF clone resource of the German cDNA consortium.</title>
        <authorList>
            <person name="Bechtel S."/>
            <person name="Rosenfelder H."/>
            <person name="Duda A."/>
            <person name="Schmidt C.P."/>
            <person name="Ernst U."/>
            <person name="Wellenreuther R."/>
            <person name="Mehrle A."/>
            <person name="Schuster C."/>
            <person name="Bahr A."/>
            <person name="Bloecker H."/>
            <person name="Heubner D."/>
            <person name="Hoerlein A."/>
            <person name="Michel G."/>
            <person name="Wedler H."/>
            <person name="Koehrer K."/>
            <person name="Ottenwaelder B."/>
            <person name="Poustka A."/>
            <person name="Wiemann S."/>
            <person name="Schupp I."/>
        </authorList>
    </citation>
    <scope>NUCLEOTIDE SEQUENCE [LARGE SCALE MRNA] OF 99-380 (ISOFORM 1)</scope>
    <source>
        <tissue>Melanoma</tissue>
    </source>
</reference>
<evidence type="ECO:0000250" key="1">
    <source>
        <dbReference type="UniProtKB" id="P36164"/>
    </source>
</evidence>
<evidence type="ECO:0000250" key="2">
    <source>
        <dbReference type="UniProtKB" id="Q3U145"/>
    </source>
</evidence>
<evidence type="ECO:0000255" key="3"/>
<evidence type="ECO:0000303" key="4">
    <source>
    </source>
</evidence>
<evidence type="ECO:0000303" key="5">
    <source>
    </source>
</evidence>
<evidence type="ECO:0000305" key="6"/>
<proteinExistence type="evidence at protein level"/>
<keyword id="KW-0025">Alternative splicing</keyword>
<keyword id="KW-0256">Endoplasmic reticulum</keyword>
<keyword id="KW-0472">Membrane</keyword>
<keyword id="KW-1267">Proteomics identification</keyword>
<keyword id="KW-1185">Reference proteome</keyword>
<keyword id="KW-0812">Transmembrane</keyword>
<keyword id="KW-1133">Transmembrane helix</keyword>
<organism>
    <name type="scientific">Homo sapiens</name>
    <name type="common">Human</name>
    <dbReference type="NCBI Taxonomy" id="9606"/>
    <lineage>
        <taxon>Eukaryota</taxon>
        <taxon>Metazoa</taxon>
        <taxon>Chordata</taxon>
        <taxon>Craniata</taxon>
        <taxon>Vertebrata</taxon>
        <taxon>Euteleostomi</taxon>
        <taxon>Mammalia</taxon>
        <taxon>Eutheria</taxon>
        <taxon>Euarchontoglires</taxon>
        <taxon>Primates</taxon>
        <taxon>Haplorrhini</taxon>
        <taxon>Catarrhini</taxon>
        <taxon>Hominidae</taxon>
        <taxon>Homo</taxon>
    </lineage>
</organism>
<dbReference type="EMBL" id="AK300583">
    <property type="protein sequence ID" value="BAG62282.1"/>
    <property type="molecule type" value="mRNA"/>
</dbReference>
<dbReference type="EMBL" id="AB015752">
    <property type="status" value="NOT_ANNOTATED_CDS"/>
    <property type="molecule type" value="Genomic_DNA"/>
</dbReference>
<dbReference type="EMBL" id="AC093329">
    <property type="status" value="NOT_ANNOTATED_CDS"/>
    <property type="molecule type" value="Genomic_DNA"/>
</dbReference>
<dbReference type="EMBL" id="AC106038">
    <property type="status" value="NOT_ANNOTATED_CDS"/>
    <property type="molecule type" value="Genomic_DNA"/>
</dbReference>
<dbReference type="EMBL" id="BC113828">
    <property type="protein sequence ID" value="AAI13829.1"/>
    <property type="molecule type" value="mRNA"/>
</dbReference>
<dbReference type="EMBL" id="AY147881">
    <property type="protein sequence ID" value="AAN05737.1"/>
    <property type="status" value="ALT_INIT"/>
    <property type="molecule type" value="mRNA"/>
</dbReference>
<dbReference type="EMBL" id="AL834364">
    <property type="protein sequence ID" value="CAD39028.2"/>
    <property type="status" value="ALT_INIT"/>
    <property type="molecule type" value="mRNA"/>
</dbReference>
<dbReference type="CCDS" id="CCDS34920.2">
    <molecule id="Q6YI46-1"/>
</dbReference>
<dbReference type="CCDS" id="CCDS55260.1">
    <molecule id="Q6YI46-4"/>
</dbReference>
<dbReference type="RefSeq" id="NP_001008495.2">
    <molecule id="Q6YI46-1"/>
    <property type="nucleotide sequence ID" value="NM_001008495.4"/>
</dbReference>
<dbReference type="RefSeq" id="NP_001139745.1">
    <molecule id="Q6YI46-4"/>
    <property type="nucleotide sequence ID" value="NM_001146273.1"/>
</dbReference>
<dbReference type="SMR" id="Q6YI46"/>
<dbReference type="BioGRID" id="127978">
    <property type="interactions" value="6"/>
</dbReference>
<dbReference type="FunCoup" id="Q6YI46">
    <property type="interactions" value="697"/>
</dbReference>
<dbReference type="STRING" id="9606.ENSP00000414786"/>
<dbReference type="TCDB" id="9.B.27.5.1">
    <property type="family name" value="the death effector domain a (deda) family"/>
</dbReference>
<dbReference type="iPTMnet" id="Q6YI46"/>
<dbReference type="PhosphoSitePlus" id="Q6YI46"/>
<dbReference type="SwissPalm" id="Q6YI46"/>
<dbReference type="BioMuta" id="TMEM64"/>
<dbReference type="DMDM" id="147736782"/>
<dbReference type="jPOST" id="Q6YI46"/>
<dbReference type="MassIVE" id="Q6YI46"/>
<dbReference type="PaxDb" id="9606-ENSP00000414786"/>
<dbReference type="PeptideAtlas" id="Q6YI46"/>
<dbReference type="ProteomicsDB" id="24468"/>
<dbReference type="ProteomicsDB" id="67851">
    <molecule id="Q6YI46-1"/>
</dbReference>
<dbReference type="ProteomicsDB" id="67852">
    <molecule id="Q6YI46-2"/>
</dbReference>
<dbReference type="Antibodypedia" id="77108">
    <property type="antibodies" value="29 antibodies from 8 providers"/>
</dbReference>
<dbReference type="DNASU" id="169200"/>
<dbReference type="Ensembl" id="ENST00000418210.2">
    <molecule id="Q6YI46-4"/>
    <property type="protein sequence ID" value="ENSP00000411951.2"/>
    <property type="gene ID" value="ENSG00000180694.14"/>
</dbReference>
<dbReference type="Ensembl" id="ENST00000458549.7">
    <molecule id="Q6YI46-1"/>
    <property type="protein sequence ID" value="ENSP00000414786.2"/>
    <property type="gene ID" value="ENSG00000180694.14"/>
</dbReference>
<dbReference type="Ensembl" id="ENST00000519519.5">
    <molecule id="Q6YI46-2"/>
    <property type="protein sequence ID" value="ENSP00000429832.1"/>
    <property type="gene ID" value="ENSG00000180694.14"/>
</dbReference>
<dbReference type="GeneID" id="169200"/>
<dbReference type="KEGG" id="hsa:169200"/>
<dbReference type="MANE-Select" id="ENST00000458549.7">
    <property type="protein sequence ID" value="ENSP00000414786.2"/>
    <property type="RefSeq nucleotide sequence ID" value="NM_001008495.4"/>
    <property type="RefSeq protein sequence ID" value="NP_001008495.2"/>
</dbReference>
<dbReference type="UCSC" id="uc003yen.3">
    <molecule id="Q6YI46-1"/>
    <property type="organism name" value="human"/>
</dbReference>
<dbReference type="AGR" id="HGNC:25441"/>
<dbReference type="CTD" id="169200"/>
<dbReference type="DisGeNET" id="169200"/>
<dbReference type="GeneCards" id="TMEM64"/>
<dbReference type="HGNC" id="HGNC:25441">
    <property type="gene designation" value="TMEM64"/>
</dbReference>
<dbReference type="HPA" id="ENSG00000180694">
    <property type="expression patterns" value="Tissue enriched (epididymis)"/>
</dbReference>
<dbReference type="MIM" id="620429">
    <property type="type" value="gene"/>
</dbReference>
<dbReference type="neXtProt" id="NX_Q6YI46"/>
<dbReference type="OpenTargets" id="ENSG00000180694"/>
<dbReference type="PharmGKB" id="PA142670777"/>
<dbReference type="VEuPathDB" id="HostDB:ENSG00000180694"/>
<dbReference type="eggNOG" id="KOG3140">
    <property type="taxonomic scope" value="Eukaryota"/>
</dbReference>
<dbReference type="GeneTree" id="ENSGT00390000007813"/>
<dbReference type="HOGENOM" id="CLU_069147_0_0_1"/>
<dbReference type="InParanoid" id="Q6YI46"/>
<dbReference type="OMA" id="QNGLYHC"/>
<dbReference type="OrthoDB" id="166803at2759"/>
<dbReference type="PAN-GO" id="Q6YI46">
    <property type="GO annotations" value="4 GO annotations based on evolutionary models"/>
</dbReference>
<dbReference type="PhylomeDB" id="Q6YI46"/>
<dbReference type="TreeFam" id="TF323931"/>
<dbReference type="PathwayCommons" id="Q6YI46"/>
<dbReference type="BioGRID-ORCS" id="169200">
    <property type="hits" value="23 hits in 1157 CRISPR screens"/>
</dbReference>
<dbReference type="ChiTaRS" id="TMEM64">
    <property type="organism name" value="human"/>
</dbReference>
<dbReference type="GenomeRNAi" id="169200"/>
<dbReference type="Pharos" id="Q6YI46">
    <property type="development level" value="Tdark"/>
</dbReference>
<dbReference type="PRO" id="PR:Q6YI46"/>
<dbReference type="Proteomes" id="UP000005640">
    <property type="component" value="Chromosome 8"/>
</dbReference>
<dbReference type="RNAct" id="Q6YI46">
    <property type="molecule type" value="protein"/>
</dbReference>
<dbReference type="Bgee" id="ENSG00000180694">
    <property type="expression patterns" value="Expressed in corpus epididymis and 195 other cell types or tissues"/>
</dbReference>
<dbReference type="ExpressionAtlas" id="Q6YI46">
    <property type="expression patterns" value="baseline and differential"/>
</dbReference>
<dbReference type="GO" id="GO:0005783">
    <property type="term" value="C:endoplasmic reticulum"/>
    <property type="evidence" value="ECO:0000318"/>
    <property type="project" value="GO_Central"/>
</dbReference>
<dbReference type="GO" id="GO:0016020">
    <property type="term" value="C:membrane"/>
    <property type="evidence" value="ECO:0007669"/>
    <property type="project" value="UniProtKB-SubCell"/>
</dbReference>
<dbReference type="GO" id="GO:0090090">
    <property type="term" value="P:negative regulation of canonical Wnt signaling pathway"/>
    <property type="evidence" value="ECO:0000250"/>
    <property type="project" value="UniProtKB"/>
</dbReference>
<dbReference type="GO" id="GO:0045668">
    <property type="term" value="P:negative regulation of osteoblast differentiation"/>
    <property type="evidence" value="ECO:0000250"/>
    <property type="project" value="UniProtKB"/>
</dbReference>
<dbReference type="GO" id="GO:0030316">
    <property type="term" value="P:osteoclast differentiation"/>
    <property type="evidence" value="ECO:0007669"/>
    <property type="project" value="Ensembl"/>
</dbReference>
<dbReference type="GO" id="GO:0045780">
    <property type="term" value="P:positive regulation of bone resorption"/>
    <property type="evidence" value="ECO:0000318"/>
    <property type="project" value="GO_Central"/>
</dbReference>
<dbReference type="GO" id="GO:0045600">
    <property type="term" value="P:positive regulation of fat cell differentiation"/>
    <property type="evidence" value="ECO:0000250"/>
    <property type="project" value="UniProtKB"/>
</dbReference>
<dbReference type="GO" id="GO:0045672">
    <property type="term" value="P:positive regulation of osteoclast differentiation"/>
    <property type="evidence" value="ECO:0000318"/>
    <property type="project" value="GO_Central"/>
</dbReference>
<dbReference type="GO" id="GO:0051480">
    <property type="term" value="P:regulation of cytosolic calcium ion concentration"/>
    <property type="evidence" value="ECO:0000318"/>
    <property type="project" value="GO_Central"/>
</dbReference>
<dbReference type="InterPro" id="IPR053069">
    <property type="entry name" value="TVP38/TMEM64"/>
</dbReference>
<dbReference type="InterPro" id="IPR032816">
    <property type="entry name" value="VTT_dom"/>
</dbReference>
<dbReference type="PANTHER" id="PTHR46593">
    <property type="entry name" value="TRANSMEMBRANE PROTEIN 64"/>
    <property type="match status" value="1"/>
</dbReference>
<dbReference type="PANTHER" id="PTHR46593:SF1">
    <property type="entry name" value="TRANSMEMBRANE PROTEIN 64"/>
    <property type="match status" value="1"/>
</dbReference>
<dbReference type="Pfam" id="PF09335">
    <property type="entry name" value="VTT_dom"/>
    <property type="match status" value="1"/>
</dbReference>
<gene>
    <name type="primary">TMEM64</name>
</gene>
<protein>
    <recommendedName>
        <fullName>Transmembrane protein 64</fullName>
    </recommendedName>
</protein>
<name>TMM64_HUMAN</name>
<accession>Q6YI46</accession>
<accession>B4DUC0</accession>
<accession>F5GXM4</accession>
<accession>Q2HIZ7</accession>
<accession>Q8N3G6</accession>
<comment type="function">
    <text evidence="2">Positively regulates TNFSF11-induced osteoclast differentiation. Acts as a regulator of TNFSF11-mediated Ca(2+) signaling pathways via its interaction with SERCA2 which is critical for the TNFSF11-induced CREB1 activation and mitochondrial ROS generation necessary for proper osteoclast generation. Association between TMEM64 and SERCA2 in the ER leads to cytosolic Ca (2+) spiking for activation of NFATC1 and production of mitochondrial ROS, thereby triggering Ca (2+) signaling cascades that promote osteoclast differentiation and activation. Negatively regulates osteoblast differentiation and positively regulates adipocyte differentiation via modulation of the canonical Wnt signaling pathway. Mediates the switch in lineage commitment to osteogenesis rather than to adipogenesis in mesenchymal stem cells by negatively regulating the expression, activity and nuclear localization of CTNNB1.</text>
</comment>
<comment type="subunit">
    <text evidence="2">Interacts with ATP2A2.</text>
</comment>
<comment type="subcellular location">
    <subcellularLocation>
        <location evidence="3">Membrane</location>
        <topology evidence="3">Multi-pass membrane protein</topology>
    </subcellularLocation>
    <subcellularLocation>
        <location evidence="2">Endoplasmic reticulum</location>
    </subcellularLocation>
</comment>
<comment type="alternative products">
    <event type="alternative splicing"/>
    <isoform>
        <id>Q6YI46-1</id>
        <name>1</name>
        <sequence type="displayed"/>
    </isoform>
    <isoform>
        <id>Q6YI46-2</id>
        <name>2</name>
        <sequence type="described" ref="VSP_025441 VSP_025442"/>
    </isoform>
    <isoform>
        <id>Q6YI46-3</id>
        <name>3</name>
        <sequence type="described" ref="VSP_044998 VSP_044999"/>
    </isoform>
    <isoform>
        <id>Q6YI46-4</id>
        <name>4</name>
        <sequence type="described" ref="VSP_044999"/>
    </isoform>
</comment>
<comment type="domain">
    <text evidence="1">The VTT domain was previously called the SNARE-assoc domain. As there is no evidence that this domain associates with SNARE proteins, it was renamed as VMP1, TMEM41, and TVP38 (VTT) domain.</text>
</comment>
<comment type="similarity">
    <text evidence="6">Belongs to the TVP38/TMEM64 family.</text>
</comment>
<comment type="sequence caution" evidence="6">
    <conflict type="erroneous initiation">
        <sequence resource="EMBL-CDS" id="AAN05737"/>
    </conflict>
</comment>
<comment type="sequence caution" evidence="6">
    <conflict type="erroneous initiation">
        <sequence resource="EMBL-CDS" id="CAD39028"/>
    </conflict>
</comment>
<feature type="chain" id="PRO_0000287342" description="Transmembrane protein 64">
    <location>
        <begin position="1"/>
        <end position="380"/>
    </location>
</feature>
<feature type="transmembrane region" description="Helical" evidence="3">
    <location>
        <begin position="50"/>
        <end position="70"/>
    </location>
</feature>
<feature type="transmembrane region" description="Helical" evidence="3">
    <location>
        <begin position="84"/>
        <end position="104"/>
    </location>
</feature>
<feature type="transmembrane region" description="Helical" evidence="3">
    <location>
        <begin position="120"/>
        <end position="140"/>
    </location>
</feature>
<feature type="transmembrane region" description="Helical" evidence="3">
    <location>
        <begin position="160"/>
        <end position="180"/>
    </location>
</feature>
<feature type="transmembrane region" description="Helical" evidence="3">
    <location>
        <begin position="188"/>
        <end position="208"/>
    </location>
</feature>
<feature type="transmembrane region" description="Helical" evidence="3">
    <location>
        <begin position="308"/>
        <end position="328"/>
    </location>
</feature>
<feature type="region of interest" description="VTT domain" evidence="1">
    <location>
        <begin position="186"/>
        <end position="296"/>
    </location>
</feature>
<feature type="splice variant" id="VSP_025441" description="In isoform 2." evidence="5">
    <location>
        <begin position="1"/>
        <end position="261"/>
    </location>
</feature>
<feature type="splice variant" id="VSP_044998" description="In isoform 3." evidence="4">
    <location>
        <begin position="1"/>
        <end position="194"/>
    </location>
</feature>
<feature type="splice variant" id="VSP_025442" description="In isoform 2." evidence="5">
    <original>AVFS</original>
    <variation>MPPR</variation>
    <location>
        <begin position="262"/>
        <end position="265"/>
    </location>
</feature>
<feature type="splice variant" id="VSP_044999" description="In isoform 3 and isoform 4." evidence="4">
    <location>
        <begin position="266"/>
        <end position="317"/>
    </location>
</feature>
<feature type="sequence conflict" description="In Ref. 4; AAN05737." evidence="6" ref="4">
    <original>L</original>
    <variation>S</variation>
    <location>
        <position position="66"/>
    </location>
</feature>
<feature type="sequence conflict" description="In Ref. 1; BAG62282." evidence="6" ref="1">
    <original>Q</original>
    <variation>L</variation>
    <location>
        <position position="333"/>
    </location>
</feature>
<sequence length="380" mass="39665">MRSPGGILLQALPRLLQHAALPGLAELPARWALPRGAGGDGPADRLPRGGGASAAAAAAAASGALLGAYLERHGPPEASELPEPGGALAGGPGSGGGGVVVGVAEVRNWRCCCLGSTCWCRSLVLVCVLAALCFASLALVRRYLHHLLLWVESLDSLLGVLLFVVGFIVVSFPCGWGYIVLNVAAGYLYGFVLGMGLMMVGVLIGTFIAHVVCKRLLTAWVAARIQSSEKLSAVIRVVEGGSGLKVVALARLTPIPFGLQNAVFSITDLSLPNYLMASSVGLLPTQLLNSYLGTTLRTMEDVIAEQSVSGYFVFCLQIIISIGLMFYVVHRAQVELNAAIVACEMELKSSLVKGNQPNTSGSSFYNKRTLTFSGGGINVV</sequence>